<name>RL28_KLEP7</name>
<feature type="chain" id="PRO_1000007257" description="Large ribosomal subunit protein bL28">
    <location>
        <begin position="1"/>
        <end position="78"/>
    </location>
</feature>
<evidence type="ECO:0000255" key="1">
    <source>
        <dbReference type="HAMAP-Rule" id="MF_00373"/>
    </source>
</evidence>
<evidence type="ECO:0000305" key="2"/>
<organism>
    <name type="scientific">Klebsiella pneumoniae subsp. pneumoniae (strain ATCC 700721 / MGH 78578)</name>
    <dbReference type="NCBI Taxonomy" id="272620"/>
    <lineage>
        <taxon>Bacteria</taxon>
        <taxon>Pseudomonadati</taxon>
        <taxon>Pseudomonadota</taxon>
        <taxon>Gammaproteobacteria</taxon>
        <taxon>Enterobacterales</taxon>
        <taxon>Enterobacteriaceae</taxon>
        <taxon>Klebsiella/Raoultella group</taxon>
        <taxon>Klebsiella</taxon>
        <taxon>Klebsiella pneumoniae complex</taxon>
    </lineage>
</organism>
<protein>
    <recommendedName>
        <fullName evidence="1">Large ribosomal subunit protein bL28</fullName>
    </recommendedName>
    <alternativeName>
        <fullName evidence="2">50S ribosomal protein L28</fullName>
    </alternativeName>
</protein>
<comment type="similarity">
    <text evidence="1">Belongs to the bacterial ribosomal protein bL28 family.</text>
</comment>
<accession>A6TFM8</accession>
<dbReference type="EMBL" id="CP000647">
    <property type="protein sequence ID" value="ABR79362.1"/>
    <property type="molecule type" value="Genomic_DNA"/>
</dbReference>
<dbReference type="RefSeq" id="WP_000091955.1">
    <property type="nucleotide sequence ID" value="NC_009648.1"/>
</dbReference>
<dbReference type="SMR" id="A6TFM8"/>
<dbReference type="STRING" id="272620.KPN_03977"/>
<dbReference type="jPOST" id="A6TFM8"/>
<dbReference type="PaxDb" id="272620-KPN_03977"/>
<dbReference type="EnsemblBacteria" id="ABR79362">
    <property type="protein sequence ID" value="ABR79362"/>
    <property type="gene ID" value="KPN_03977"/>
</dbReference>
<dbReference type="GeneID" id="93778350"/>
<dbReference type="KEGG" id="kpn:KPN_03977"/>
<dbReference type="HOGENOM" id="CLU_064548_3_1_6"/>
<dbReference type="Proteomes" id="UP000000265">
    <property type="component" value="Chromosome"/>
</dbReference>
<dbReference type="GO" id="GO:0022625">
    <property type="term" value="C:cytosolic large ribosomal subunit"/>
    <property type="evidence" value="ECO:0007669"/>
    <property type="project" value="TreeGrafter"/>
</dbReference>
<dbReference type="GO" id="GO:0003735">
    <property type="term" value="F:structural constituent of ribosome"/>
    <property type="evidence" value="ECO:0007669"/>
    <property type="project" value="InterPro"/>
</dbReference>
<dbReference type="GO" id="GO:0006412">
    <property type="term" value="P:translation"/>
    <property type="evidence" value="ECO:0007669"/>
    <property type="project" value="UniProtKB-UniRule"/>
</dbReference>
<dbReference type="FunFam" id="2.30.170.40:FF:000001">
    <property type="entry name" value="50S ribosomal protein L28"/>
    <property type="match status" value="1"/>
</dbReference>
<dbReference type="Gene3D" id="2.30.170.40">
    <property type="entry name" value="Ribosomal protein L28/L24"/>
    <property type="match status" value="1"/>
</dbReference>
<dbReference type="HAMAP" id="MF_00373">
    <property type="entry name" value="Ribosomal_bL28"/>
    <property type="match status" value="1"/>
</dbReference>
<dbReference type="InterPro" id="IPR026569">
    <property type="entry name" value="Ribosomal_bL28"/>
</dbReference>
<dbReference type="InterPro" id="IPR034704">
    <property type="entry name" value="Ribosomal_bL28/bL31-like_sf"/>
</dbReference>
<dbReference type="InterPro" id="IPR001383">
    <property type="entry name" value="Ribosomal_bL28_bact-type"/>
</dbReference>
<dbReference type="InterPro" id="IPR037147">
    <property type="entry name" value="Ribosomal_bL28_sf"/>
</dbReference>
<dbReference type="NCBIfam" id="TIGR00009">
    <property type="entry name" value="L28"/>
    <property type="match status" value="1"/>
</dbReference>
<dbReference type="PANTHER" id="PTHR13528">
    <property type="entry name" value="39S RIBOSOMAL PROTEIN L28, MITOCHONDRIAL"/>
    <property type="match status" value="1"/>
</dbReference>
<dbReference type="PANTHER" id="PTHR13528:SF2">
    <property type="entry name" value="LARGE RIBOSOMAL SUBUNIT PROTEIN BL28M"/>
    <property type="match status" value="1"/>
</dbReference>
<dbReference type="Pfam" id="PF00830">
    <property type="entry name" value="Ribosomal_L28"/>
    <property type="match status" value="1"/>
</dbReference>
<dbReference type="SUPFAM" id="SSF143800">
    <property type="entry name" value="L28p-like"/>
    <property type="match status" value="1"/>
</dbReference>
<proteinExistence type="inferred from homology"/>
<reference key="1">
    <citation type="submission" date="2006-09" db="EMBL/GenBank/DDBJ databases">
        <authorList>
            <consortium name="The Klebsiella pneumonia Genome Sequencing Project"/>
            <person name="McClelland M."/>
            <person name="Sanderson E.K."/>
            <person name="Spieth J."/>
            <person name="Clifton W.S."/>
            <person name="Latreille P."/>
            <person name="Sabo A."/>
            <person name="Pepin K."/>
            <person name="Bhonagiri V."/>
            <person name="Porwollik S."/>
            <person name="Ali J."/>
            <person name="Wilson R.K."/>
        </authorList>
    </citation>
    <scope>NUCLEOTIDE SEQUENCE [LARGE SCALE GENOMIC DNA]</scope>
    <source>
        <strain>ATCC 700721 / MGH 78578</strain>
    </source>
</reference>
<keyword id="KW-0687">Ribonucleoprotein</keyword>
<keyword id="KW-0689">Ribosomal protein</keyword>
<gene>
    <name evidence="1" type="primary">rpmB</name>
    <name type="ordered locus">KPN78578_39380</name>
    <name type="ORF">KPN_03977</name>
</gene>
<sequence length="78" mass="9006">MSRVCQVTGKRPVTGNNRSHALNATKRRFLPNLHSHRFWVESEKRFVTLRVSAKGMRVIDKKGIDTVLAELRARGEKY</sequence>